<dbReference type="EC" id="3.1.-.-" evidence="1"/>
<dbReference type="EC" id="5.6.2.4" evidence="1"/>
<dbReference type="EMBL" id="CP001033">
    <property type="protein sequence ID" value="ACB90397.1"/>
    <property type="molecule type" value="Genomic_DNA"/>
</dbReference>
<dbReference type="RefSeq" id="WP_000767235.1">
    <property type="nucleotide sequence ID" value="NC_010582.1"/>
</dbReference>
<dbReference type="SMR" id="B2IPX3"/>
<dbReference type="KEGG" id="spw:SPCG_1145"/>
<dbReference type="HOGENOM" id="CLU_001114_3_1_9"/>
<dbReference type="GO" id="GO:0005829">
    <property type="term" value="C:cytosol"/>
    <property type="evidence" value="ECO:0007669"/>
    <property type="project" value="TreeGrafter"/>
</dbReference>
<dbReference type="GO" id="GO:0033202">
    <property type="term" value="C:DNA helicase complex"/>
    <property type="evidence" value="ECO:0007669"/>
    <property type="project" value="TreeGrafter"/>
</dbReference>
<dbReference type="GO" id="GO:0043138">
    <property type="term" value="F:3'-5' DNA helicase activity"/>
    <property type="evidence" value="ECO:0007669"/>
    <property type="project" value="UniProtKB-UniRule"/>
</dbReference>
<dbReference type="GO" id="GO:0008408">
    <property type="term" value="F:3'-5' exonuclease activity"/>
    <property type="evidence" value="ECO:0007669"/>
    <property type="project" value="UniProtKB-UniRule"/>
</dbReference>
<dbReference type="GO" id="GO:0005524">
    <property type="term" value="F:ATP binding"/>
    <property type="evidence" value="ECO:0007669"/>
    <property type="project" value="UniProtKB-UniRule"/>
</dbReference>
<dbReference type="GO" id="GO:0016887">
    <property type="term" value="F:ATP hydrolysis activity"/>
    <property type="evidence" value="ECO:0007669"/>
    <property type="project" value="RHEA"/>
</dbReference>
<dbReference type="GO" id="GO:0003690">
    <property type="term" value="F:double-stranded DNA binding"/>
    <property type="evidence" value="ECO:0007669"/>
    <property type="project" value="UniProtKB-UniRule"/>
</dbReference>
<dbReference type="GO" id="GO:0000724">
    <property type="term" value="P:double-strand break repair via homologous recombination"/>
    <property type="evidence" value="ECO:0007669"/>
    <property type="project" value="UniProtKB-UniRule"/>
</dbReference>
<dbReference type="CDD" id="cd17932">
    <property type="entry name" value="DEXQc_UvrD"/>
    <property type="match status" value="1"/>
</dbReference>
<dbReference type="FunFam" id="3.40.50.300:FF:001196">
    <property type="entry name" value="ATP-dependent helicase/nuclease subunit A"/>
    <property type="match status" value="1"/>
</dbReference>
<dbReference type="FunFam" id="3.40.50.300:FF:002351">
    <property type="entry name" value="ATP-dependent helicase/nuclease subunit A"/>
    <property type="match status" value="1"/>
</dbReference>
<dbReference type="FunFam" id="3.40.50.300:FF:002570">
    <property type="entry name" value="ATP-dependent helicase/nuclease subunit A"/>
    <property type="match status" value="1"/>
</dbReference>
<dbReference type="Gene3D" id="3.90.320.10">
    <property type="match status" value="1"/>
</dbReference>
<dbReference type="Gene3D" id="3.40.50.300">
    <property type="entry name" value="P-loop containing nucleotide triphosphate hydrolases"/>
    <property type="match status" value="4"/>
</dbReference>
<dbReference type="Gene3D" id="1.10.486.10">
    <property type="entry name" value="PCRA, domain 4"/>
    <property type="match status" value="1"/>
</dbReference>
<dbReference type="HAMAP" id="MF_01451">
    <property type="entry name" value="AddA"/>
    <property type="match status" value="1"/>
</dbReference>
<dbReference type="InterPro" id="IPR014152">
    <property type="entry name" value="AddA"/>
</dbReference>
<dbReference type="InterPro" id="IPR014017">
    <property type="entry name" value="DNA_helicase_UvrD-like_C"/>
</dbReference>
<dbReference type="InterPro" id="IPR000212">
    <property type="entry name" value="DNA_helicase_UvrD/REP"/>
</dbReference>
<dbReference type="InterPro" id="IPR027417">
    <property type="entry name" value="P-loop_NTPase"/>
</dbReference>
<dbReference type="InterPro" id="IPR011604">
    <property type="entry name" value="PDDEXK-like_dom_sf"/>
</dbReference>
<dbReference type="InterPro" id="IPR038726">
    <property type="entry name" value="PDDEXK_AddAB-type"/>
</dbReference>
<dbReference type="InterPro" id="IPR011335">
    <property type="entry name" value="Restrct_endonuc-II-like"/>
</dbReference>
<dbReference type="InterPro" id="IPR014016">
    <property type="entry name" value="UvrD-like_ATP-bd"/>
</dbReference>
<dbReference type="NCBIfam" id="TIGR02785">
    <property type="entry name" value="addA_Gpos"/>
    <property type="match status" value="1"/>
</dbReference>
<dbReference type="PANTHER" id="PTHR11070:SF48">
    <property type="entry name" value="ATP-DEPENDENT HELICASE_NUCLEASE SUBUNIT A"/>
    <property type="match status" value="1"/>
</dbReference>
<dbReference type="PANTHER" id="PTHR11070">
    <property type="entry name" value="UVRD / RECB / PCRA DNA HELICASE FAMILY MEMBER"/>
    <property type="match status" value="1"/>
</dbReference>
<dbReference type="Pfam" id="PF12705">
    <property type="entry name" value="PDDEXK_1"/>
    <property type="match status" value="1"/>
</dbReference>
<dbReference type="Pfam" id="PF00580">
    <property type="entry name" value="UvrD-helicase"/>
    <property type="match status" value="1"/>
</dbReference>
<dbReference type="Pfam" id="PF13361">
    <property type="entry name" value="UvrD_C"/>
    <property type="match status" value="1"/>
</dbReference>
<dbReference type="SUPFAM" id="SSF52540">
    <property type="entry name" value="P-loop containing nucleoside triphosphate hydrolases"/>
    <property type="match status" value="1"/>
</dbReference>
<dbReference type="SUPFAM" id="SSF52980">
    <property type="entry name" value="Restriction endonuclease-like"/>
    <property type="match status" value="1"/>
</dbReference>
<dbReference type="PROSITE" id="PS51198">
    <property type="entry name" value="UVRD_HELICASE_ATP_BIND"/>
    <property type="match status" value="1"/>
</dbReference>
<dbReference type="PROSITE" id="PS51217">
    <property type="entry name" value="UVRD_HELICASE_CTER"/>
    <property type="match status" value="1"/>
</dbReference>
<sequence length="1216" mass="140272">MKLIPFLSEEEIQKLQEAEANSSKEQKKTAEQIEAIYTSGQNILVSASAGSGKTFVMAERILDQLARGVEISQLFISTFTVKAATELKERLEKKISKKIQETDDVDLKQHLGRQLADLPNAAIGTMDSFTQKFLGKHGYLLDIAPNFRILQNQSEQLLLENEVFHEVFEAHYQGKQKETFSHLLKNFAGRGKDERGLRQQVYKIYDFLQSTSNPQKWLSKSFLKGFEKADFTSEKEKLTEQIKQALWDLESFFRYHLDNDAKEFAKAAYLENVQLILDEIDSLNQESDSQAYQAVLARVVAISKEKNGRALTNASRKADLKPLADTYNEERKTQFAKLGQLSDQIAILDYQERYHGDTWKLAKTFQSFMSDFVEAYRQRKRQENAFEFADISHYTIEILENFPQVRESYQERFHEVMVDEYQDTNHIQERMLELLSNGHNRFMVGDIKQSIYRFRQADPQIFNEKFQRYAQNPQEGKLILLKENFRSSSEVLSATNDVFERLMDQEVGEINYDNKHQLVFANTKLTPNPDNKAEFLLYDKDDTGEEEESQTETKLTGEMRLVIKEILKLHQEKGVAFKEIALLTSSRNRNDQILLALSEYGIPVKTDGEQNNYLQSLEVQVMLDTLRVIHNPLQDYALVALMKSPMFGFDEDELARLSLQKAEDKAHENLYEKLVNAQKKASSQKGLIHTALAEKLKQFMDILASWRLYAKPHSLYDLIWKIYNDRFYYDYVGALPNGPARQANLYALALRADQFEKSNFKGLSRFIRMIDQVLEAQHDLASVAVAPPKDAVELMTIHKSKGLEFPYVFILNMDQDFNKQDSMSEVILSRQNGLGVKYIAKMETGAVEDHYPKTIKLSIPSLTYRQNEEELQLASYSEQMRLLYVAMTRAEKKLYLVGKGSREKLEAKQYPAAKNGKLNSNTRLQARNFQDWLWAISKVFTKDKLNFSYRFIGEDQLTREAIGELETKSPLRDSSQADNRQSDTIKEALEMLKEVEVYNTLHRAAIELPSVQTPSQIKKFYEPVMDMEGVEIAGQGQSVGKKISFDLPDFSTKEKVTGAEIGSATHELMQRIDLSQQLTLASLTETLKQVQTSQAVRDKINLDKILAFFDTVLGQEILANTDHLYREQPFSMLKRDQKSQEDFVVRGILDGYLLYENKIVLFDYKTDRYDEPSQLVDRYRGQLALYEEALSRAYSIKNIEKYLILLGKDEVQVVKV</sequence>
<organism>
    <name type="scientific">Streptococcus pneumoniae (strain CGSP14)</name>
    <dbReference type="NCBI Taxonomy" id="516950"/>
    <lineage>
        <taxon>Bacteria</taxon>
        <taxon>Bacillati</taxon>
        <taxon>Bacillota</taxon>
        <taxon>Bacilli</taxon>
        <taxon>Lactobacillales</taxon>
        <taxon>Streptococcaceae</taxon>
        <taxon>Streptococcus</taxon>
    </lineage>
</organism>
<accession>B2IPX3</accession>
<keyword id="KW-0067">ATP-binding</keyword>
<keyword id="KW-0227">DNA damage</keyword>
<keyword id="KW-0234">DNA repair</keyword>
<keyword id="KW-0238">DNA-binding</keyword>
<keyword id="KW-0269">Exonuclease</keyword>
<keyword id="KW-0347">Helicase</keyword>
<keyword id="KW-0378">Hydrolase</keyword>
<keyword id="KW-0413">Isomerase</keyword>
<keyword id="KW-0540">Nuclease</keyword>
<keyword id="KW-0547">Nucleotide-binding</keyword>
<reference key="1">
    <citation type="journal article" date="2009" name="BMC Genomics">
        <title>Genome evolution driven by host adaptations results in a more virulent and antimicrobial-resistant Streptococcus pneumoniae serotype 14.</title>
        <authorList>
            <person name="Ding F."/>
            <person name="Tang P."/>
            <person name="Hsu M.-H."/>
            <person name="Cui P."/>
            <person name="Hu S."/>
            <person name="Yu J."/>
            <person name="Chiu C.-H."/>
        </authorList>
    </citation>
    <scope>NUCLEOTIDE SEQUENCE [LARGE SCALE GENOMIC DNA]</scope>
    <source>
        <strain>CGSP14</strain>
    </source>
</reference>
<comment type="function">
    <text evidence="1">The heterodimer acts as both an ATP-dependent DNA helicase and an ATP-dependent, dual-direction single-stranded exonuclease. Recognizes the chi site generating a DNA molecule suitable for the initiation of homologous recombination. The AddA nuclease domain is required for chi fragment generation; this subunit has the helicase and 3' -&gt; 5' nuclease activities.</text>
</comment>
<comment type="catalytic activity">
    <reaction evidence="1">
        <text>Couples ATP hydrolysis with the unwinding of duplex DNA by translocating in the 3'-5' direction.</text>
        <dbReference type="EC" id="5.6.2.4"/>
    </reaction>
</comment>
<comment type="catalytic activity">
    <reaction evidence="1">
        <text>ATP + H2O = ADP + phosphate + H(+)</text>
        <dbReference type="Rhea" id="RHEA:13065"/>
        <dbReference type="ChEBI" id="CHEBI:15377"/>
        <dbReference type="ChEBI" id="CHEBI:15378"/>
        <dbReference type="ChEBI" id="CHEBI:30616"/>
        <dbReference type="ChEBI" id="CHEBI:43474"/>
        <dbReference type="ChEBI" id="CHEBI:456216"/>
        <dbReference type="EC" id="5.6.2.4"/>
    </reaction>
</comment>
<comment type="cofactor">
    <cofactor evidence="1">
        <name>Mg(2+)</name>
        <dbReference type="ChEBI" id="CHEBI:18420"/>
    </cofactor>
</comment>
<comment type="subunit">
    <text evidence="1">Heterodimer of AddA and AddB/RexB.</text>
</comment>
<comment type="similarity">
    <text evidence="1">Belongs to the helicase family. AddA subfamily.</text>
</comment>
<name>ADDA_STRPS</name>
<feature type="chain" id="PRO_0000379336" description="ATP-dependent helicase/nuclease subunit A">
    <location>
        <begin position="1"/>
        <end position="1216"/>
    </location>
</feature>
<feature type="domain" description="UvrD-like helicase ATP-binding" evidence="1">
    <location>
        <begin position="26"/>
        <end position="488"/>
    </location>
</feature>
<feature type="domain" description="UvrD-like helicase C-terminal" evidence="1">
    <location>
        <begin position="515"/>
        <end position="802"/>
    </location>
</feature>
<feature type="binding site" evidence="1">
    <location>
        <begin position="47"/>
        <end position="54"/>
    </location>
    <ligand>
        <name>ATP</name>
        <dbReference type="ChEBI" id="CHEBI:30616"/>
    </ligand>
</feature>
<protein>
    <recommendedName>
        <fullName evidence="1">ATP-dependent helicase/nuclease subunit A</fullName>
        <ecNumber evidence="1">3.1.-.-</ecNumber>
        <ecNumber evidence="1">5.6.2.4</ecNumber>
    </recommendedName>
    <alternativeName>
        <fullName evidence="1">ATP-dependent helicase/nuclease AddA</fullName>
    </alternativeName>
    <alternativeName>
        <fullName evidence="1">DNA 3'-5' helicase AddA</fullName>
    </alternativeName>
</protein>
<gene>
    <name evidence="1" type="primary">addA</name>
    <name type="synonym">rexA</name>
    <name type="ordered locus">SPCG_1145</name>
</gene>
<evidence type="ECO:0000255" key="1">
    <source>
        <dbReference type="HAMAP-Rule" id="MF_01451"/>
    </source>
</evidence>
<proteinExistence type="inferred from homology"/>